<organism>
    <name type="scientific">Rubrobacter xylanophilus (strain DSM 9941 / JCM 11954 / NBRC 16129 / PRD-1)</name>
    <dbReference type="NCBI Taxonomy" id="266117"/>
    <lineage>
        <taxon>Bacteria</taxon>
        <taxon>Bacillati</taxon>
        <taxon>Actinomycetota</taxon>
        <taxon>Rubrobacteria</taxon>
        <taxon>Rubrobacterales</taxon>
        <taxon>Rubrobacteraceae</taxon>
        <taxon>Rubrobacter</taxon>
    </lineage>
</organism>
<feature type="chain" id="PRO_1000049060" description="Large ribosomal subunit protein bL20">
    <location>
        <begin position="1"/>
        <end position="133"/>
    </location>
</feature>
<comment type="function">
    <text evidence="1">Binds directly to 23S ribosomal RNA and is necessary for the in vitro assembly process of the 50S ribosomal subunit. It is not involved in the protein synthesizing functions of that subunit.</text>
</comment>
<comment type="similarity">
    <text evidence="1">Belongs to the bacterial ribosomal protein bL20 family.</text>
</comment>
<sequence>MARASRSIHARKKRRKLLKEARGYRGTKHTSYKRAKEQVWKSGVYAYVGRKQKKRDFRALWIQRINAAARRHGLSYSRFVHGLRLAGFDLDRKVLADLAVSEPEAFGAVAAQAKNALEGRPVERRVELGGAGR</sequence>
<name>RL20_RUBXD</name>
<proteinExistence type="inferred from homology"/>
<reference key="1">
    <citation type="submission" date="2006-06" db="EMBL/GenBank/DDBJ databases">
        <title>Complete sequence of Rubrobacter xylanophilus DSM 9941.</title>
        <authorList>
            <consortium name="US DOE Joint Genome Institute"/>
            <person name="Copeland A."/>
            <person name="Lucas S."/>
            <person name="Lapidus A."/>
            <person name="Barry K."/>
            <person name="Detter J.C."/>
            <person name="Glavina del Rio T."/>
            <person name="Hammon N."/>
            <person name="Israni S."/>
            <person name="Dalin E."/>
            <person name="Tice H."/>
            <person name="Pitluck S."/>
            <person name="Munk A.C."/>
            <person name="Brettin T."/>
            <person name="Bruce D."/>
            <person name="Han C."/>
            <person name="Tapia R."/>
            <person name="Gilna P."/>
            <person name="Schmutz J."/>
            <person name="Larimer F."/>
            <person name="Land M."/>
            <person name="Hauser L."/>
            <person name="Kyrpides N."/>
            <person name="Lykidis A."/>
            <person name="da Costa M.S."/>
            <person name="Rainey F.A."/>
            <person name="Empadinhas N."/>
            <person name="Jolivet E."/>
            <person name="Battista J.R."/>
            <person name="Richardson P."/>
        </authorList>
    </citation>
    <scope>NUCLEOTIDE SEQUENCE [LARGE SCALE GENOMIC DNA]</scope>
    <source>
        <strain>DSM 9941 / JCM 11954 / NBRC 16129 / PRD-1</strain>
    </source>
</reference>
<dbReference type="EMBL" id="CP000386">
    <property type="protein sequence ID" value="ABG04267.1"/>
    <property type="molecule type" value="Genomic_DNA"/>
</dbReference>
<dbReference type="RefSeq" id="WP_011564284.1">
    <property type="nucleotide sequence ID" value="NC_008148.1"/>
</dbReference>
<dbReference type="SMR" id="Q1AWG1"/>
<dbReference type="STRING" id="266117.Rxyl_1303"/>
<dbReference type="KEGG" id="rxy:Rxyl_1303"/>
<dbReference type="eggNOG" id="COG0292">
    <property type="taxonomic scope" value="Bacteria"/>
</dbReference>
<dbReference type="HOGENOM" id="CLU_123265_0_1_11"/>
<dbReference type="OrthoDB" id="9808966at2"/>
<dbReference type="PhylomeDB" id="Q1AWG1"/>
<dbReference type="Proteomes" id="UP000006637">
    <property type="component" value="Chromosome"/>
</dbReference>
<dbReference type="GO" id="GO:1990904">
    <property type="term" value="C:ribonucleoprotein complex"/>
    <property type="evidence" value="ECO:0007669"/>
    <property type="project" value="UniProtKB-KW"/>
</dbReference>
<dbReference type="GO" id="GO:0005840">
    <property type="term" value="C:ribosome"/>
    <property type="evidence" value="ECO:0007669"/>
    <property type="project" value="UniProtKB-KW"/>
</dbReference>
<dbReference type="GO" id="GO:0019843">
    <property type="term" value="F:rRNA binding"/>
    <property type="evidence" value="ECO:0007669"/>
    <property type="project" value="UniProtKB-UniRule"/>
</dbReference>
<dbReference type="GO" id="GO:0003735">
    <property type="term" value="F:structural constituent of ribosome"/>
    <property type="evidence" value="ECO:0007669"/>
    <property type="project" value="InterPro"/>
</dbReference>
<dbReference type="GO" id="GO:0000027">
    <property type="term" value="P:ribosomal large subunit assembly"/>
    <property type="evidence" value="ECO:0007669"/>
    <property type="project" value="UniProtKB-UniRule"/>
</dbReference>
<dbReference type="GO" id="GO:0006412">
    <property type="term" value="P:translation"/>
    <property type="evidence" value="ECO:0007669"/>
    <property type="project" value="InterPro"/>
</dbReference>
<dbReference type="CDD" id="cd07026">
    <property type="entry name" value="Ribosomal_L20"/>
    <property type="match status" value="1"/>
</dbReference>
<dbReference type="FunFam" id="1.10.1900.20:FF:000001">
    <property type="entry name" value="50S ribosomal protein L20"/>
    <property type="match status" value="1"/>
</dbReference>
<dbReference type="Gene3D" id="6.10.160.10">
    <property type="match status" value="1"/>
</dbReference>
<dbReference type="Gene3D" id="1.10.1900.20">
    <property type="entry name" value="Ribosomal protein L20"/>
    <property type="match status" value="1"/>
</dbReference>
<dbReference type="HAMAP" id="MF_00382">
    <property type="entry name" value="Ribosomal_bL20"/>
    <property type="match status" value="1"/>
</dbReference>
<dbReference type="InterPro" id="IPR005813">
    <property type="entry name" value="Ribosomal_bL20"/>
</dbReference>
<dbReference type="InterPro" id="IPR049946">
    <property type="entry name" value="RIBOSOMAL_L20_CS"/>
</dbReference>
<dbReference type="InterPro" id="IPR035566">
    <property type="entry name" value="Ribosomal_protein_bL20_C"/>
</dbReference>
<dbReference type="NCBIfam" id="TIGR01032">
    <property type="entry name" value="rplT_bact"/>
    <property type="match status" value="1"/>
</dbReference>
<dbReference type="PANTHER" id="PTHR10986">
    <property type="entry name" value="39S RIBOSOMAL PROTEIN L20"/>
    <property type="match status" value="1"/>
</dbReference>
<dbReference type="Pfam" id="PF00453">
    <property type="entry name" value="Ribosomal_L20"/>
    <property type="match status" value="1"/>
</dbReference>
<dbReference type="PRINTS" id="PR00062">
    <property type="entry name" value="RIBOSOMALL20"/>
</dbReference>
<dbReference type="SUPFAM" id="SSF74731">
    <property type="entry name" value="Ribosomal protein L20"/>
    <property type="match status" value="1"/>
</dbReference>
<dbReference type="PROSITE" id="PS00937">
    <property type="entry name" value="RIBOSOMAL_L20"/>
    <property type="match status" value="1"/>
</dbReference>
<keyword id="KW-1185">Reference proteome</keyword>
<keyword id="KW-0687">Ribonucleoprotein</keyword>
<keyword id="KW-0689">Ribosomal protein</keyword>
<keyword id="KW-0694">RNA-binding</keyword>
<keyword id="KW-0699">rRNA-binding</keyword>
<evidence type="ECO:0000255" key="1">
    <source>
        <dbReference type="HAMAP-Rule" id="MF_00382"/>
    </source>
</evidence>
<evidence type="ECO:0000305" key="2"/>
<gene>
    <name evidence="1" type="primary">rplT</name>
    <name type="ordered locus">Rxyl_1303</name>
</gene>
<protein>
    <recommendedName>
        <fullName evidence="1">Large ribosomal subunit protein bL20</fullName>
    </recommendedName>
    <alternativeName>
        <fullName evidence="2">50S ribosomal protein L20</fullName>
    </alternativeName>
</protein>
<accession>Q1AWG1</accession>